<name>TBB3_PEA</name>
<keyword id="KW-0963">Cytoplasm</keyword>
<keyword id="KW-0206">Cytoskeleton</keyword>
<keyword id="KW-0342">GTP-binding</keyword>
<keyword id="KW-0460">Magnesium</keyword>
<keyword id="KW-0479">Metal-binding</keyword>
<keyword id="KW-0493">Microtubule</keyword>
<keyword id="KW-0547">Nucleotide-binding</keyword>
<organism>
    <name type="scientific">Pisum sativum</name>
    <name type="common">Garden pea</name>
    <name type="synonym">Lathyrus oleraceus</name>
    <dbReference type="NCBI Taxonomy" id="3888"/>
    <lineage>
        <taxon>Eukaryota</taxon>
        <taxon>Viridiplantae</taxon>
        <taxon>Streptophyta</taxon>
        <taxon>Embryophyta</taxon>
        <taxon>Tracheophyta</taxon>
        <taxon>Spermatophyta</taxon>
        <taxon>Magnoliopsida</taxon>
        <taxon>eudicotyledons</taxon>
        <taxon>Gunneridae</taxon>
        <taxon>Pentapetalae</taxon>
        <taxon>rosids</taxon>
        <taxon>fabids</taxon>
        <taxon>Fabales</taxon>
        <taxon>Fabaceae</taxon>
        <taxon>Papilionoideae</taxon>
        <taxon>50 kb inversion clade</taxon>
        <taxon>NPAAA clade</taxon>
        <taxon>Hologalegina</taxon>
        <taxon>IRL clade</taxon>
        <taxon>Fabeae</taxon>
        <taxon>Pisum</taxon>
    </lineage>
</organism>
<evidence type="ECO:0000250" key="1">
    <source>
        <dbReference type="UniProtKB" id="P68363"/>
    </source>
</evidence>
<evidence type="ECO:0000250" key="2">
    <source>
        <dbReference type="UniProtKB" id="Q13509"/>
    </source>
</evidence>
<evidence type="ECO:0000256" key="3">
    <source>
        <dbReference type="SAM" id="MobiDB-lite"/>
    </source>
</evidence>
<evidence type="ECO:0000305" key="4"/>
<proteinExistence type="evidence at transcript level"/>
<gene>
    <name type="primary">TUBB3</name>
    <name type="synonym">TUB3</name>
</gene>
<dbReference type="EMBL" id="X54846">
    <property type="protein sequence ID" value="CAA38615.1"/>
    <property type="molecule type" value="mRNA"/>
</dbReference>
<dbReference type="PIR" id="S20870">
    <property type="entry name" value="S20870"/>
</dbReference>
<dbReference type="SMR" id="P29502"/>
<dbReference type="GO" id="GO:0005737">
    <property type="term" value="C:cytoplasm"/>
    <property type="evidence" value="ECO:0007669"/>
    <property type="project" value="UniProtKB-KW"/>
</dbReference>
<dbReference type="GO" id="GO:0005874">
    <property type="term" value="C:microtubule"/>
    <property type="evidence" value="ECO:0007669"/>
    <property type="project" value="UniProtKB-KW"/>
</dbReference>
<dbReference type="GO" id="GO:0005525">
    <property type="term" value="F:GTP binding"/>
    <property type="evidence" value="ECO:0007669"/>
    <property type="project" value="UniProtKB-KW"/>
</dbReference>
<dbReference type="GO" id="GO:0003924">
    <property type="term" value="F:GTPase activity"/>
    <property type="evidence" value="ECO:0007669"/>
    <property type="project" value="InterPro"/>
</dbReference>
<dbReference type="GO" id="GO:0046872">
    <property type="term" value="F:metal ion binding"/>
    <property type="evidence" value="ECO:0007669"/>
    <property type="project" value="UniProtKB-KW"/>
</dbReference>
<dbReference type="GO" id="GO:0005200">
    <property type="term" value="F:structural constituent of cytoskeleton"/>
    <property type="evidence" value="ECO:0007669"/>
    <property type="project" value="InterPro"/>
</dbReference>
<dbReference type="GO" id="GO:0007017">
    <property type="term" value="P:microtubule-based process"/>
    <property type="evidence" value="ECO:0007669"/>
    <property type="project" value="InterPro"/>
</dbReference>
<dbReference type="CDD" id="cd02187">
    <property type="entry name" value="beta_tubulin"/>
    <property type="match status" value="1"/>
</dbReference>
<dbReference type="FunFam" id="1.10.287.600:FF:000006">
    <property type="entry name" value="Tubulin beta chain"/>
    <property type="match status" value="1"/>
</dbReference>
<dbReference type="FunFam" id="3.30.1330.20:FF:000002">
    <property type="entry name" value="Tubulin beta chain"/>
    <property type="match status" value="1"/>
</dbReference>
<dbReference type="FunFam" id="3.40.50.1440:FF:000005">
    <property type="entry name" value="Tubulin beta chain"/>
    <property type="match status" value="1"/>
</dbReference>
<dbReference type="Gene3D" id="1.10.287.600">
    <property type="entry name" value="Helix hairpin bin"/>
    <property type="match status" value="1"/>
</dbReference>
<dbReference type="Gene3D" id="3.30.1330.20">
    <property type="entry name" value="Tubulin/FtsZ, C-terminal domain"/>
    <property type="match status" value="1"/>
</dbReference>
<dbReference type="Gene3D" id="3.40.50.1440">
    <property type="entry name" value="Tubulin/FtsZ, GTPase domain"/>
    <property type="match status" value="1"/>
</dbReference>
<dbReference type="InterPro" id="IPR002453">
    <property type="entry name" value="Beta_tubulin"/>
</dbReference>
<dbReference type="InterPro" id="IPR008280">
    <property type="entry name" value="Tub_FtsZ_C"/>
</dbReference>
<dbReference type="InterPro" id="IPR000217">
    <property type="entry name" value="Tubulin"/>
</dbReference>
<dbReference type="InterPro" id="IPR037103">
    <property type="entry name" value="Tubulin/FtsZ-like_C"/>
</dbReference>
<dbReference type="InterPro" id="IPR018316">
    <property type="entry name" value="Tubulin/FtsZ_2-layer-sand-dom"/>
</dbReference>
<dbReference type="InterPro" id="IPR036525">
    <property type="entry name" value="Tubulin/FtsZ_GTPase_sf"/>
</dbReference>
<dbReference type="InterPro" id="IPR023123">
    <property type="entry name" value="Tubulin_C"/>
</dbReference>
<dbReference type="InterPro" id="IPR017975">
    <property type="entry name" value="Tubulin_CS"/>
</dbReference>
<dbReference type="InterPro" id="IPR003008">
    <property type="entry name" value="Tubulin_FtsZ_GTPase"/>
</dbReference>
<dbReference type="PANTHER" id="PTHR11588">
    <property type="entry name" value="TUBULIN"/>
    <property type="match status" value="1"/>
</dbReference>
<dbReference type="Pfam" id="PF00091">
    <property type="entry name" value="Tubulin"/>
    <property type="match status" value="1"/>
</dbReference>
<dbReference type="Pfam" id="PF03953">
    <property type="entry name" value="Tubulin_C"/>
    <property type="match status" value="1"/>
</dbReference>
<dbReference type="PRINTS" id="PR01163">
    <property type="entry name" value="BETATUBULIN"/>
</dbReference>
<dbReference type="PRINTS" id="PR01161">
    <property type="entry name" value="TUBULIN"/>
</dbReference>
<dbReference type="SMART" id="SM00864">
    <property type="entry name" value="Tubulin"/>
    <property type="match status" value="1"/>
</dbReference>
<dbReference type="SMART" id="SM00865">
    <property type="entry name" value="Tubulin_C"/>
    <property type="match status" value="1"/>
</dbReference>
<dbReference type="SUPFAM" id="SSF55307">
    <property type="entry name" value="Tubulin C-terminal domain-like"/>
    <property type="match status" value="1"/>
</dbReference>
<dbReference type="SUPFAM" id="SSF52490">
    <property type="entry name" value="Tubulin nucleotide-binding domain-like"/>
    <property type="match status" value="1"/>
</dbReference>
<dbReference type="PROSITE" id="PS00227">
    <property type="entry name" value="TUBULIN"/>
    <property type="match status" value="1"/>
</dbReference>
<feature type="chain" id="PRO_0000048373" description="Tubulin beta-3 chain">
    <location>
        <begin position="1" status="less than"/>
        <end position="440"/>
    </location>
</feature>
<feature type="region of interest" description="Disordered" evidence="3">
    <location>
        <begin position="411"/>
        <end position="440"/>
    </location>
</feature>
<feature type="compositionally biased region" description="Acidic residues" evidence="3">
    <location>
        <begin position="420"/>
        <end position="440"/>
    </location>
</feature>
<feature type="binding site" evidence="2">
    <location>
        <position position="2"/>
    </location>
    <ligand>
        <name>GTP</name>
        <dbReference type="ChEBI" id="CHEBI:37565"/>
    </ligand>
</feature>
<feature type="binding site" evidence="1">
    <location>
        <position position="60"/>
    </location>
    <ligand>
        <name>GTP</name>
        <dbReference type="ChEBI" id="CHEBI:37565"/>
    </ligand>
</feature>
<feature type="binding site" evidence="1">
    <location>
        <position position="60"/>
    </location>
    <ligand>
        <name>Mg(2+)</name>
        <dbReference type="ChEBI" id="CHEBI:18420"/>
    </ligand>
</feature>
<feature type="binding site" evidence="2">
    <location>
        <position position="129"/>
    </location>
    <ligand>
        <name>GTP</name>
        <dbReference type="ChEBI" id="CHEBI:37565"/>
    </ligand>
</feature>
<feature type="binding site" evidence="2">
    <location>
        <position position="133"/>
    </location>
    <ligand>
        <name>GTP</name>
        <dbReference type="ChEBI" id="CHEBI:37565"/>
    </ligand>
</feature>
<feature type="binding site" evidence="2">
    <location>
        <position position="134"/>
    </location>
    <ligand>
        <name>GTP</name>
        <dbReference type="ChEBI" id="CHEBI:37565"/>
    </ligand>
</feature>
<feature type="binding site" evidence="2">
    <location>
        <position position="135"/>
    </location>
    <ligand>
        <name>GTP</name>
        <dbReference type="ChEBI" id="CHEBI:37565"/>
    </ligand>
</feature>
<feature type="binding site" evidence="2">
    <location>
        <position position="195"/>
    </location>
    <ligand>
        <name>GTP</name>
        <dbReference type="ChEBI" id="CHEBI:37565"/>
    </ligand>
</feature>
<feature type="binding site" evidence="2">
    <location>
        <position position="217"/>
    </location>
    <ligand>
        <name>GTP</name>
        <dbReference type="ChEBI" id="CHEBI:37565"/>
    </ligand>
</feature>
<feature type="non-terminal residue">
    <location>
        <position position="1"/>
    </location>
</feature>
<reference key="1">
    <citation type="journal article" date="1992" name="Plant Mol. Biol.">
        <title>The beta-tubulin gene family of pea: primary structures, genomic organization and intron-dependent evolution of genes.</title>
        <authorList>
            <person name="Liaud M.-F."/>
            <person name="Brinkmann H."/>
            <person name="Cerff R."/>
        </authorList>
    </citation>
    <scope>NUCLEOTIDE SEQUENCE [MRNA]</scope>
    <source>
        <strain>cv. Rosakrone</strain>
    </source>
</reference>
<sequence>GQCGNQIGSKFWEVVCDEHGIDPTGRYVGNSDLQLERVNVYYNEASCGRFVPRAILMDLEPGTMDSVRTGPYGQIFRPDNFVFGQSGAGNNWAKGHYTEGAELIDSVLDVVRKEAENCDCLQGFQVCHSLGGGTGSGMGTLLISKIREEYPDRMMLTFSVFPSPKVSDTVVEPYNATLSVHQLVENADECMVLDNEALYDICFRTLKLTTPSFGDLNHLISATMSGVTCCLRFPGQLNSDLRKLAVNLIPFPRLHFFMVGFAPLTSRGSQQYRALTVPELTQQMWDSKNMMCAADPRHGRYLTASAMFRGKMSTKEVDEQMINVQNKNSSYFVEWIPNNVKSSVCDIAPRGLSMASTFIGNSTSIQEMFRRVSEQFTAMFRRKAFLHWYTGEGMDEMEFTEAESNMNDLVSEYQQYQDATADEEGEYEDEEEEEPEHGYE</sequence>
<accession>P29502</accession>
<comment type="function">
    <text>Tubulin is the major constituent of microtubules, a cylinder consisting of laterally associated linear protofilaments composed of alpha- and beta-tubulin heterodimers. Microtubules grow by the addition of GTP-tubulin dimers to the microtubule end, where a stabilizing cap forms. Below the cap, tubulin dimers are in GDP-bound state, owing to GTPase activity of alpha-tubulin.</text>
</comment>
<comment type="cofactor">
    <cofactor evidence="1">
        <name>Mg(2+)</name>
        <dbReference type="ChEBI" id="CHEBI:18420"/>
    </cofactor>
</comment>
<comment type="subunit">
    <text>Dimer of alpha and beta chains. A typical microtubule is a hollow water-filled tube with an outer diameter of 25 nm and an inner diameter of 15 nM. Alpha-beta heterodimers associate head-to-tail to form protofilaments running lengthwise along the microtubule wall with the beta-tubulin subunit facing the microtubule plus end conferring a structural polarity. Microtubules usually have 13 protofilaments but different protofilament numbers can be found in some organisms and specialized cells.</text>
</comment>
<comment type="subcellular location">
    <subcellularLocation>
        <location>Cytoplasm</location>
        <location>Cytoskeleton</location>
    </subcellularLocation>
</comment>
<comment type="similarity">
    <text evidence="4">Belongs to the tubulin family.</text>
</comment>
<protein>
    <recommendedName>
        <fullName>Tubulin beta-3 chain</fullName>
    </recommendedName>
    <alternativeName>
        <fullName>Beta-3-tubulin</fullName>
    </alternativeName>
</protein>